<organism>
    <name type="scientific">Panax ginseng</name>
    <name type="common">Korean ginseng</name>
    <dbReference type="NCBI Taxonomy" id="4054"/>
    <lineage>
        <taxon>Eukaryota</taxon>
        <taxon>Viridiplantae</taxon>
        <taxon>Streptophyta</taxon>
        <taxon>Embryophyta</taxon>
        <taxon>Tracheophyta</taxon>
        <taxon>Spermatophyta</taxon>
        <taxon>Magnoliopsida</taxon>
        <taxon>eudicotyledons</taxon>
        <taxon>Gunneridae</taxon>
        <taxon>Pentapetalae</taxon>
        <taxon>asterids</taxon>
        <taxon>campanulids</taxon>
        <taxon>Apiales</taxon>
        <taxon>Araliaceae</taxon>
        <taxon>Panax</taxon>
    </lineage>
</organism>
<evidence type="ECO:0000255" key="1">
    <source>
        <dbReference type="HAMAP-Rule" id="MF_00643"/>
    </source>
</evidence>
<dbReference type="EMBL" id="AY582139">
    <property type="protein sequence ID" value="AAT98525.1"/>
    <property type="molecule type" value="Genomic_DNA"/>
</dbReference>
<dbReference type="RefSeq" id="YP_086982.1">
    <property type="nucleotide sequence ID" value="NC_006290.1"/>
</dbReference>
<dbReference type="SMR" id="Q68RZ0"/>
<dbReference type="GeneID" id="3021501"/>
<dbReference type="GO" id="GO:0009535">
    <property type="term" value="C:chloroplast thylakoid membrane"/>
    <property type="evidence" value="ECO:0007669"/>
    <property type="project" value="UniProtKB-SubCell"/>
</dbReference>
<dbReference type="GO" id="GO:0009539">
    <property type="term" value="C:photosystem II reaction center"/>
    <property type="evidence" value="ECO:0007669"/>
    <property type="project" value="InterPro"/>
</dbReference>
<dbReference type="GO" id="GO:0009055">
    <property type="term" value="F:electron transfer activity"/>
    <property type="evidence" value="ECO:0007669"/>
    <property type="project" value="UniProtKB-UniRule"/>
</dbReference>
<dbReference type="GO" id="GO:0020037">
    <property type="term" value="F:heme binding"/>
    <property type="evidence" value="ECO:0007669"/>
    <property type="project" value="InterPro"/>
</dbReference>
<dbReference type="GO" id="GO:0005506">
    <property type="term" value="F:iron ion binding"/>
    <property type="evidence" value="ECO:0007669"/>
    <property type="project" value="UniProtKB-UniRule"/>
</dbReference>
<dbReference type="GO" id="GO:0009767">
    <property type="term" value="P:photosynthetic electron transport chain"/>
    <property type="evidence" value="ECO:0007669"/>
    <property type="project" value="InterPro"/>
</dbReference>
<dbReference type="HAMAP" id="MF_00643">
    <property type="entry name" value="PSII_PsbF"/>
    <property type="match status" value="1"/>
</dbReference>
<dbReference type="InterPro" id="IPR006241">
    <property type="entry name" value="PSII_cyt_b559_bsu"/>
</dbReference>
<dbReference type="InterPro" id="IPR006216">
    <property type="entry name" value="PSII_cyt_b559_CS"/>
</dbReference>
<dbReference type="InterPro" id="IPR013081">
    <property type="entry name" value="PSII_cyt_b559_N"/>
</dbReference>
<dbReference type="NCBIfam" id="TIGR01333">
    <property type="entry name" value="cyt_b559_beta"/>
    <property type="match status" value="1"/>
</dbReference>
<dbReference type="Pfam" id="PF00283">
    <property type="entry name" value="Cytochrom_B559"/>
    <property type="match status" value="1"/>
</dbReference>
<dbReference type="PIRSF" id="PIRSF000037">
    <property type="entry name" value="PsbF"/>
    <property type="match status" value="1"/>
</dbReference>
<dbReference type="SUPFAM" id="SSF161045">
    <property type="entry name" value="Cytochrome b559 subunits"/>
    <property type="match status" value="1"/>
</dbReference>
<dbReference type="PROSITE" id="PS00537">
    <property type="entry name" value="CYTOCHROME_B559"/>
    <property type="match status" value="1"/>
</dbReference>
<feature type="chain" id="PRO_0000200435" description="Cytochrome b559 subunit beta">
    <location>
        <begin position="1"/>
        <end position="39"/>
    </location>
</feature>
<feature type="transmembrane region" description="Helical" evidence="1">
    <location>
        <begin position="14"/>
        <end position="30"/>
    </location>
</feature>
<feature type="binding site" description="axial binding residue" evidence="1">
    <location>
        <position position="18"/>
    </location>
    <ligand>
        <name>heme</name>
        <dbReference type="ChEBI" id="CHEBI:30413"/>
        <note>ligand shared with alpha subunit</note>
    </ligand>
    <ligandPart>
        <name>Fe</name>
        <dbReference type="ChEBI" id="CHEBI:18248"/>
    </ligandPart>
</feature>
<comment type="function">
    <text evidence="1">This b-type cytochrome is tightly associated with the reaction center of photosystem II (PSII). PSII is a light-driven water:plastoquinone oxidoreductase that uses light energy to abstract electrons from H(2)O, generating O(2) and a proton gradient subsequently used for ATP formation. It consists of a core antenna complex that captures photons, and an electron transfer chain that converts photonic excitation into a charge separation.</text>
</comment>
<comment type="cofactor">
    <cofactor evidence="1">
        <name>heme b</name>
        <dbReference type="ChEBI" id="CHEBI:60344"/>
    </cofactor>
    <text evidence="1">With its partner (PsbE) binds heme. PSII binds additional chlorophylls, carotenoids and specific lipids.</text>
</comment>
<comment type="subunit">
    <text evidence="1">Heterodimer of an alpha subunit and a beta subunit. PSII is composed of 1 copy each of membrane proteins PsbA, PsbB, PsbC, PsbD, PsbE, PsbF, PsbH, PsbI, PsbJ, PsbK, PsbL, PsbM, PsbT, PsbX, PsbY, PsbZ, Psb30/Ycf12, at least 3 peripheral proteins of the oxygen-evolving complex and a large number of cofactors. It forms dimeric complexes.</text>
</comment>
<comment type="subcellular location">
    <subcellularLocation>
        <location evidence="1">Plastid</location>
        <location evidence="1">Chloroplast thylakoid membrane</location>
        <topology evidence="1">Single-pass membrane protein</topology>
    </subcellularLocation>
</comment>
<comment type="similarity">
    <text evidence="1">Belongs to the PsbE/PsbF family.</text>
</comment>
<gene>
    <name evidence="1" type="primary">psbF</name>
    <name type="ORF">PSC0662</name>
</gene>
<name>PSBF_PANGI</name>
<accession>Q68RZ0</accession>
<geneLocation type="chloroplast"/>
<sequence length="39" mass="4424">MTIDRTYPIFTVRWLAVHGLAVPTVSFLGSISAMQFIQR</sequence>
<protein>
    <recommendedName>
        <fullName evidence="1">Cytochrome b559 subunit beta</fullName>
    </recommendedName>
    <alternativeName>
        <fullName evidence="1">PSII reaction center subunit VI</fullName>
    </alternativeName>
</protein>
<keyword id="KW-0150">Chloroplast</keyword>
<keyword id="KW-0249">Electron transport</keyword>
<keyword id="KW-0349">Heme</keyword>
<keyword id="KW-0408">Iron</keyword>
<keyword id="KW-0472">Membrane</keyword>
<keyword id="KW-0479">Metal-binding</keyword>
<keyword id="KW-0602">Photosynthesis</keyword>
<keyword id="KW-0604">Photosystem II</keyword>
<keyword id="KW-0934">Plastid</keyword>
<keyword id="KW-0793">Thylakoid</keyword>
<keyword id="KW-0812">Transmembrane</keyword>
<keyword id="KW-1133">Transmembrane helix</keyword>
<keyword id="KW-0813">Transport</keyword>
<reference key="1">
    <citation type="journal article" date="2004" name="DNA Res.">
        <title>Complete chloroplast genome sequence from Korea ginseng (Panax schinseng Nees) and comparative analysis of sequence evolution among 17 vascular plants.</title>
        <authorList>
            <person name="Kim K.-J."/>
            <person name="Lee H.-L."/>
        </authorList>
    </citation>
    <scope>NUCLEOTIDE SEQUENCE [LARGE SCALE GENOMIC DNA]</scope>
</reference>
<proteinExistence type="inferred from homology"/>